<comment type="function">
    <text evidence="1">Cell wall formation.</text>
</comment>
<comment type="catalytic activity">
    <reaction evidence="1">
        <text>UDP-N-acetyl-alpha-D-muramate + L-alanine + ATP = UDP-N-acetyl-alpha-D-muramoyl-L-alanine + ADP + phosphate + H(+)</text>
        <dbReference type="Rhea" id="RHEA:23372"/>
        <dbReference type="ChEBI" id="CHEBI:15378"/>
        <dbReference type="ChEBI" id="CHEBI:30616"/>
        <dbReference type="ChEBI" id="CHEBI:43474"/>
        <dbReference type="ChEBI" id="CHEBI:57972"/>
        <dbReference type="ChEBI" id="CHEBI:70757"/>
        <dbReference type="ChEBI" id="CHEBI:83898"/>
        <dbReference type="ChEBI" id="CHEBI:456216"/>
        <dbReference type="EC" id="6.3.2.8"/>
    </reaction>
</comment>
<comment type="pathway">
    <text evidence="1">Cell wall biogenesis; peptidoglycan biosynthesis.</text>
</comment>
<comment type="subcellular location">
    <subcellularLocation>
        <location evidence="1">Cytoplasm</location>
    </subcellularLocation>
</comment>
<comment type="similarity">
    <text evidence="1">Belongs to the MurCDEF family.</text>
</comment>
<reference key="1">
    <citation type="journal article" date="2007" name="Nat. Biotechnol.">
        <title>Comparative analysis of the complete genome sequence of the plant growth-promoting bacterium Bacillus amyloliquefaciens FZB42.</title>
        <authorList>
            <person name="Chen X.H."/>
            <person name="Koumoutsi A."/>
            <person name="Scholz R."/>
            <person name="Eisenreich A."/>
            <person name="Schneider K."/>
            <person name="Heinemeyer I."/>
            <person name="Morgenstern B."/>
            <person name="Voss B."/>
            <person name="Hess W.R."/>
            <person name="Reva O."/>
            <person name="Junge H."/>
            <person name="Voigt B."/>
            <person name="Jungblut P.R."/>
            <person name="Vater J."/>
            <person name="Suessmuth R."/>
            <person name="Liesegang H."/>
            <person name="Strittmatter A."/>
            <person name="Gottschalk G."/>
            <person name="Borriss R."/>
        </authorList>
    </citation>
    <scope>NUCLEOTIDE SEQUENCE [LARGE SCALE GENOMIC DNA]</scope>
    <source>
        <strain>DSM 23117 / BGSC 10A6 / LMG 26770 / FZB42</strain>
    </source>
</reference>
<feature type="chain" id="PRO_1000004309" description="UDP-N-acetylmuramate--L-alanine ligase">
    <location>
        <begin position="1"/>
        <end position="432"/>
    </location>
</feature>
<feature type="binding site" evidence="1">
    <location>
        <begin position="108"/>
        <end position="114"/>
    </location>
    <ligand>
        <name>ATP</name>
        <dbReference type="ChEBI" id="CHEBI:30616"/>
    </ligand>
</feature>
<accession>A7Z7S3</accession>
<sequence length="432" mass="48384">MTVYHFVGIKGTGMSPLAQILHDTGYQVQGSDIEKQIFTQAALEKRNIPIYPFSADNIKPGLTVIAGNAFPDSHPEIAKALAEGIPVIRYHKFLAEYMKKYTSVAVTGAHGKTSTTGLLAHVMQQAKPTSFLIGDGTGRGNESSEYFVFEACEYRRHFLSYQPDYAIMTNIDFDHPDYFANIDDVFDAFQNMALQVNKGIIACGDDEYLPKIHANVPVVYYGTGEENDFQARNIVKNTEGTTFDVFVRNTFYDTFYIPAYGHHNVLNSLAVIALCHYEEIDVNMIKLGLESFGGVKRRFNEKVIGSQVLIDDYAHHPTEIKVTIEAARQKYPEREIIAVFQPHTFTRTQSFLDEFAESLSAADRVYLCDIFGSARENVGKLTITDLQEKIANAELIEENDTSVLKAHEGAVLIFMGAGDIQKYMRAYENVIA</sequence>
<gene>
    <name evidence="1" type="primary">murC</name>
    <name type="ordered locus">RBAM_026910</name>
</gene>
<name>MURC_BACVZ</name>
<keyword id="KW-0067">ATP-binding</keyword>
<keyword id="KW-0131">Cell cycle</keyword>
<keyword id="KW-0132">Cell division</keyword>
<keyword id="KW-0133">Cell shape</keyword>
<keyword id="KW-0961">Cell wall biogenesis/degradation</keyword>
<keyword id="KW-0963">Cytoplasm</keyword>
<keyword id="KW-0436">Ligase</keyword>
<keyword id="KW-0547">Nucleotide-binding</keyword>
<keyword id="KW-0573">Peptidoglycan synthesis</keyword>
<protein>
    <recommendedName>
        <fullName evidence="1">UDP-N-acetylmuramate--L-alanine ligase</fullName>
        <ecNumber evidence="1">6.3.2.8</ecNumber>
    </recommendedName>
    <alternativeName>
        <fullName evidence="1">UDP-N-acetylmuramoyl-L-alanine synthetase</fullName>
    </alternativeName>
</protein>
<proteinExistence type="inferred from homology"/>
<evidence type="ECO:0000255" key="1">
    <source>
        <dbReference type="HAMAP-Rule" id="MF_00046"/>
    </source>
</evidence>
<organism>
    <name type="scientific">Bacillus velezensis (strain DSM 23117 / BGSC 10A6 / LMG 26770 / FZB42)</name>
    <name type="common">Bacillus amyloliquefaciens subsp. plantarum</name>
    <dbReference type="NCBI Taxonomy" id="326423"/>
    <lineage>
        <taxon>Bacteria</taxon>
        <taxon>Bacillati</taxon>
        <taxon>Bacillota</taxon>
        <taxon>Bacilli</taxon>
        <taxon>Bacillales</taxon>
        <taxon>Bacillaceae</taxon>
        <taxon>Bacillus</taxon>
        <taxon>Bacillus amyloliquefaciens group</taxon>
    </lineage>
</organism>
<dbReference type="EC" id="6.3.2.8" evidence="1"/>
<dbReference type="EMBL" id="CP000560">
    <property type="protein sequence ID" value="ABS75049.1"/>
    <property type="molecule type" value="Genomic_DNA"/>
</dbReference>
<dbReference type="RefSeq" id="WP_012118211.1">
    <property type="nucleotide sequence ID" value="NC_009725.2"/>
</dbReference>
<dbReference type="SMR" id="A7Z7S3"/>
<dbReference type="GeneID" id="93081831"/>
<dbReference type="KEGG" id="bay:RBAM_026910"/>
<dbReference type="HOGENOM" id="CLU_028104_1_0_9"/>
<dbReference type="UniPathway" id="UPA00219"/>
<dbReference type="Proteomes" id="UP000001120">
    <property type="component" value="Chromosome"/>
</dbReference>
<dbReference type="GO" id="GO:0005737">
    <property type="term" value="C:cytoplasm"/>
    <property type="evidence" value="ECO:0007669"/>
    <property type="project" value="UniProtKB-SubCell"/>
</dbReference>
<dbReference type="GO" id="GO:0005524">
    <property type="term" value="F:ATP binding"/>
    <property type="evidence" value="ECO:0007669"/>
    <property type="project" value="UniProtKB-UniRule"/>
</dbReference>
<dbReference type="GO" id="GO:0008763">
    <property type="term" value="F:UDP-N-acetylmuramate-L-alanine ligase activity"/>
    <property type="evidence" value="ECO:0007669"/>
    <property type="project" value="UniProtKB-UniRule"/>
</dbReference>
<dbReference type="GO" id="GO:0051301">
    <property type="term" value="P:cell division"/>
    <property type="evidence" value="ECO:0007669"/>
    <property type="project" value="UniProtKB-KW"/>
</dbReference>
<dbReference type="GO" id="GO:0071555">
    <property type="term" value="P:cell wall organization"/>
    <property type="evidence" value="ECO:0007669"/>
    <property type="project" value="UniProtKB-KW"/>
</dbReference>
<dbReference type="GO" id="GO:0009252">
    <property type="term" value="P:peptidoglycan biosynthetic process"/>
    <property type="evidence" value="ECO:0007669"/>
    <property type="project" value="UniProtKB-UniRule"/>
</dbReference>
<dbReference type="GO" id="GO:0008360">
    <property type="term" value="P:regulation of cell shape"/>
    <property type="evidence" value="ECO:0007669"/>
    <property type="project" value="UniProtKB-KW"/>
</dbReference>
<dbReference type="Gene3D" id="3.90.190.20">
    <property type="entry name" value="Mur ligase, C-terminal domain"/>
    <property type="match status" value="1"/>
</dbReference>
<dbReference type="Gene3D" id="3.40.1190.10">
    <property type="entry name" value="Mur-like, catalytic domain"/>
    <property type="match status" value="1"/>
</dbReference>
<dbReference type="Gene3D" id="3.40.50.720">
    <property type="entry name" value="NAD(P)-binding Rossmann-like Domain"/>
    <property type="match status" value="1"/>
</dbReference>
<dbReference type="HAMAP" id="MF_00046">
    <property type="entry name" value="MurC"/>
    <property type="match status" value="1"/>
</dbReference>
<dbReference type="InterPro" id="IPR036565">
    <property type="entry name" value="Mur-like_cat_sf"/>
</dbReference>
<dbReference type="InterPro" id="IPR004101">
    <property type="entry name" value="Mur_ligase_C"/>
</dbReference>
<dbReference type="InterPro" id="IPR036615">
    <property type="entry name" value="Mur_ligase_C_dom_sf"/>
</dbReference>
<dbReference type="InterPro" id="IPR013221">
    <property type="entry name" value="Mur_ligase_cen"/>
</dbReference>
<dbReference type="InterPro" id="IPR000713">
    <property type="entry name" value="Mur_ligase_N"/>
</dbReference>
<dbReference type="InterPro" id="IPR050061">
    <property type="entry name" value="MurCDEF_pg_biosynth"/>
</dbReference>
<dbReference type="InterPro" id="IPR005758">
    <property type="entry name" value="UDP-N-AcMur_Ala_ligase_MurC"/>
</dbReference>
<dbReference type="NCBIfam" id="TIGR01082">
    <property type="entry name" value="murC"/>
    <property type="match status" value="1"/>
</dbReference>
<dbReference type="PANTHER" id="PTHR43445:SF3">
    <property type="entry name" value="UDP-N-ACETYLMURAMATE--L-ALANINE LIGASE"/>
    <property type="match status" value="1"/>
</dbReference>
<dbReference type="PANTHER" id="PTHR43445">
    <property type="entry name" value="UDP-N-ACETYLMURAMATE--L-ALANINE LIGASE-RELATED"/>
    <property type="match status" value="1"/>
</dbReference>
<dbReference type="Pfam" id="PF01225">
    <property type="entry name" value="Mur_ligase"/>
    <property type="match status" value="1"/>
</dbReference>
<dbReference type="Pfam" id="PF02875">
    <property type="entry name" value="Mur_ligase_C"/>
    <property type="match status" value="1"/>
</dbReference>
<dbReference type="Pfam" id="PF08245">
    <property type="entry name" value="Mur_ligase_M"/>
    <property type="match status" value="1"/>
</dbReference>
<dbReference type="SUPFAM" id="SSF51984">
    <property type="entry name" value="MurCD N-terminal domain"/>
    <property type="match status" value="1"/>
</dbReference>
<dbReference type="SUPFAM" id="SSF53623">
    <property type="entry name" value="MurD-like peptide ligases, catalytic domain"/>
    <property type="match status" value="1"/>
</dbReference>
<dbReference type="SUPFAM" id="SSF53244">
    <property type="entry name" value="MurD-like peptide ligases, peptide-binding domain"/>
    <property type="match status" value="1"/>
</dbReference>